<organism>
    <name type="scientific">Shewanella oneidensis (strain ATCC 700550 / JCM 31522 / CIP 106686 / LMG 19005 / NCIMB 14063 / MR-1)</name>
    <dbReference type="NCBI Taxonomy" id="211586"/>
    <lineage>
        <taxon>Bacteria</taxon>
        <taxon>Pseudomonadati</taxon>
        <taxon>Pseudomonadota</taxon>
        <taxon>Gammaproteobacteria</taxon>
        <taxon>Alteromonadales</taxon>
        <taxon>Shewanellaceae</taxon>
        <taxon>Shewanella</taxon>
    </lineage>
</organism>
<feature type="chain" id="PRO_0000414181" description="Ribosomal protein uL3 glutamine methyltransferase">
    <location>
        <begin position="1"/>
        <end position="314"/>
    </location>
</feature>
<sequence>MDKIFVDEAVTELRTIGDMLRWAVSRFNDANVYYGHGTDNAWDEAIALVFHALHLPEEIGQQVILSNLTSSEKHKIVELIIRRVRERLPVPYLTNKARFAGLEFYVDERVLVPRSPIAEMIANRFGPWLYGKPVNRILDLCTGSGCIAIACAYEFDEAEVDALDISEDALDVAQVNVETLGVMDRVFPMQSDLFSAIPEGPQYDLIVSNPPYVDEEDIGDMPDEYHHEPAIGLASGRDGLDLTKRILANAAQYLTPTGILVVEVGNSMVHLMEQFPEVPFTWVNFENGGDGVFVLTRDQLIEHQSLFAIYRDAQ</sequence>
<name>PRMB_SHEON</name>
<proteinExistence type="inferred from homology"/>
<reference key="1">
    <citation type="journal article" date="2002" name="Nat. Biotechnol.">
        <title>Genome sequence of the dissimilatory metal ion-reducing bacterium Shewanella oneidensis.</title>
        <authorList>
            <person name="Heidelberg J.F."/>
            <person name="Paulsen I.T."/>
            <person name="Nelson K.E."/>
            <person name="Gaidos E.J."/>
            <person name="Nelson W.C."/>
            <person name="Read T.D."/>
            <person name="Eisen J.A."/>
            <person name="Seshadri R."/>
            <person name="Ward N.L."/>
            <person name="Methe B.A."/>
            <person name="Clayton R.A."/>
            <person name="Meyer T."/>
            <person name="Tsapin A."/>
            <person name="Scott J."/>
            <person name="Beanan M.J."/>
            <person name="Brinkac L.M."/>
            <person name="Daugherty S.C."/>
            <person name="DeBoy R.T."/>
            <person name="Dodson R.J."/>
            <person name="Durkin A.S."/>
            <person name="Haft D.H."/>
            <person name="Kolonay J.F."/>
            <person name="Madupu R."/>
            <person name="Peterson J.D."/>
            <person name="Umayam L.A."/>
            <person name="White O."/>
            <person name="Wolf A.M."/>
            <person name="Vamathevan J.J."/>
            <person name="Weidman J.F."/>
            <person name="Impraim M."/>
            <person name="Lee K."/>
            <person name="Berry K.J."/>
            <person name="Lee C."/>
            <person name="Mueller J."/>
            <person name="Khouri H.M."/>
            <person name="Gill J."/>
            <person name="Utterback T.R."/>
            <person name="McDonald L.A."/>
            <person name="Feldblyum T.V."/>
            <person name="Smith H.O."/>
            <person name="Venter J.C."/>
            <person name="Nealson K.H."/>
            <person name="Fraser C.M."/>
        </authorList>
    </citation>
    <scope>NUCLEOTIDE SEQUENCE [LARGE SCALE GENOMIC DNA]</scope>
    <source>
        <strain>ATCC 700550 / JCM 31522 / CIP 106686 / LMG 19005 / NCIMB 14063 / MR-1</strain>
    </source>
</reference>
<keyword id="KW-0489">Methyltransferase</keyword>
<keyword id="KW-1185">Reference proteome</keyword>
<keyword id="KW-0949">S-adenosyl-L-methionine</keyword>
<keyword id="KW-0808">Transferase</keyword>
<accession>Q8ECQ4</accession>
<gene>
    <name evidence="1" type="primary">prmB</name>
    <name type="ordered locus">SO_3080</name>
</gene>
<comment type="function">
    <text evidence="1">Methylates large ribosomal subunit protein uL3 on a specific glutamine residue.</text>
</comment>
<comment type="catalytic activity">
    <reaction evidence="1">
        <text>L-glutaminyl-[ribosomal protein uL3] + S-adenosyl-L-methionine = N(5)-methyl-L-glutaminyl-[ribosomal protein uL3] + S-adenosyl-L-homocysteine + H(+)</text>
        <dbReference type="Rhea" id="RHEA:45020"/>
        <dbReference type="Rhea" id="RHEA-COMP:11063"/>
        <dbReference type="Rhea" id="RHEA-COMP:11064"/>
        <dbReference type="ChEBI" id="CHEBI:15378"/>
        <dbReference type="ChEBI" id="CHEBI:30011"/>
        <dbReference type="ChEBI" id="CHEBI:57856"/>
        <dbReference type="ChEBI" id="CHEBI:59789"/>
        <dbReference type="ChEBI" id="CHEBI:61891"/>
        <dbReference type="EC" id="2.1.1.298"/>
    </reaction>
</comment>
<comment type="similarity">
    <text evidence="1">Belongs to the protein N5-glutamine methyltransferase family. PrmB subfamily.</text>
</comment>
<dbReference type="EC" id="2.1.1.298" evidence="1"/>
<dbReference type="EMBL" id="AE014299">
    <property type="protein sequence ID" value="AAN56087.2"/>
    <property type="molecule type" value="Genomic_DNA"/>
</dbReference>
<dbReference type="RefSeq" id="NP_718643.2">
    <property type="nucleotide sequence ID" value="NC_004347.2"/>
</dbReference>
<dbReference type="RefSeq" id="WP_011072977.1">
    <property type="nucleotide sequence ID" value="NC_004347.2"/>
</dbReference>
<dbReference type="SMR" id="Q8ECQ4"/>
<dbReference type="STRING" id="211586.SO_3080"/>
<dbReference type="PaxDb" id="211586-SO_3080"/>
<dbReference type="KEGG" id="son:SO_3080"/>
<dbReference type="PATRIC" id="fig|1028802.3.peg.1451"/>
<dbReference type="eggNOG" id="COG2890">
    <property type="taxonomic scope" value="Bacteria"/>
</dbReference>
<dbReference type="HOGENOM" id="CLU_018398_5_1_6"/>
<dbReference type="OrthoDB" id="9800643at2"/>
<dbReference type="PhylomeDB" id="Q8ECQ4"/>
<dbReference type="BioCyc" id="SONE211586:G1GMP-2851-MONOMER"/>
<dbReference type="Proteomes" id="UP000008186">
    <property type="component" value="Chromosome"/>
</dbReference>
<dbReference type="GO" id="GO:0005829">
    <property type="term" value="C:cytosol"/>
    <property type="evidence" value="ECO:0000318"/>
    <property type="project" value="GO_Central"/>
</dbReference>
<dbReference type="GO" id="GO:0003676">
    <property type="term" value="F:nucleic acid binding"/>
    <property type="evidence" value="ECO:0007669"/>
    <property type="project" value="InterPro"/>
</dbReference>
<dbReference type="GO" id="GO:0036009">
    <property type="term" value="F:protein-glutamine N-methyltransferase activity"/>
    <property type="evidence" value="ECO:0000318"/>
    <property type="project" value="GO_Central"/>
</dbReference>
<dbReference type="GO" id="GO:0032259">
    <property type="term" value="P:methylation"/>
    <property type="evidence" value="ECO:0007669"/>
    <property type="project" value="UniProtKB-KW"/>
</dbReference>
<dbReference type="CDD" id="cd02440">
    <property type="entry name" value="AdoMet_MTases"/>
    <property type="match status" value="1"/>
</dbReference>
<dbReference type="FunFam" id="3.40.50.150:FF:000042">
    <property type="entry name" value="50S ribosomal protein L3 glutamine methyltransferase"/>
    <property type="match status" value="1"/>
</dbReference>
<dbReference type="Gene3D" id="1.10.8.10">
    <property type="entry name" value="DNA helicase RuvA subunit, C-terminal domain"/>
    <property type="match status" value="1"/>
</dbReference>
<dbReference type="Gene3D" id="3.40.50.150">
    <property type="entry name" value="Vaccinia Virus protein VP39"/>
    <property type="match status" value="1"/>
</dbReference>
<dbReference type="HAMAP" id="MF_02125">
    <property type="entry name" value="L3_methyltr_PrmB"/>
    <property type="match status" value="1"/>
</dbReference>
<dbReference type="InterPro" id="IPR002052">
    <property type="entry name" value="DNA_methylase_N6_adenine_CS"/>
</dbReference>
<dbReference type="InterPro" id="IPR004556">
    <property type="entry name" value="HemK-like"/>
</dbReference>
<dbReference type="InterPro" id="IPR017127">
    <property type="entry name" value="Ribosome_uL3_MTase"/>
</dbReference>
<dbReference type="InterPro" id="IPR029063">
    <property type="entry name" value="SAM-dependent_MTases_sf"/>
</dbReference>
<dbReference type="InterPro" id="IPR007848">
    <property type="entry name" value="Small_mtfrase_dom"/>
</dbReference>
<dbReference type="NCBIfam" id="TIGR00536">
    <property type="entry name" value="hemK_fam"/>
    <property type="match status" value="1"/>
</dbReference>
<dbReference type="NCBIfam" id="TIGR03533">
    <property type="entry name" value="L3_gln_methyl"/>
    <property type="match status" value="1"/>
</dbReference>
<dbReference type="PANTHER" id="PTHR47806">
    <property type="entry name" value="50S RIBOSOMAL PROTEIN L3 GLUTAMINE METHYLTRANSFERASE"/>
    <property type="match status" value="1"/>
</dbReference>
<dbReference type="PANTHER" id="PTHR47806:SF1">
    <property type="entry name" value="RIBOSOMAL PROTEIN UL3 GLUTAMINE METHYLTRANSFERASE"/>
    <property type="match status" value="1"/>
</dbReference>
<dbReference type="Pfam" id="PF05175">
    <property type="entry name" value="MTS"/>
    <property type="match status" value="1"/>
</dbReference>
<dbReference type="PIRSF" id="PIRSF037167">
    <property type="entry name" value="Mtase_YfcB_prd"/>
    <property type="match status" value="1"/>
</dbReference>
<dbReference type="SUPFAM" id="SSF53335">
    <property type="entry name" value="S-adenosyl-L-methionine-dependent methyltransferases"/>
    <property type="match status" value="1"/>
</dbReference>
<protein>
    <recommendedName>
        <fullName evidence="1">Ribosomal protein uL3 glutamine methyltransferase</fullName>
        <shortName evidence="1">uL3 MTase</shortName>
        <ecNumber evidence="1">2.1.1.298</ecNumber>
    </recommendedName>
    <alternativeName>
        <fullName evidence="1">N5-glutamine methyltransferase PrmB</fullName>
    </alternativeName>
</protein>
<evidence type="ECO:0000255" key="1">
    <source>
        <dbReference type="HAMAP-Rule" id="MF_02125"/>
    </source>
</evidence>